<dbReference type="EMBL" id="AAFI02000149">
    <property type="protein sequence ID" value="EAL62471.1"/>
    <property type="molecule type" value="Genomic_DNA"/>
</dbReference>
<dbReference type="RefSeq" id="XP_635974.1">
    <property type="nucleotide sequence ID" value="XM_630882.1"/>
</dbReference>
<dbReference type="STRING" id="44689.Q54GU5"/>
<dbReference type="GlyGen" id="Q54GU5">
    <property type="glycosylation" value="1 site"/>
</dbReference>
<dbReference type="PaxDb" id="44689-DDB0266504"/>
<dbReference type="EnsemblProtists" id="EAL62471">
    <property type="protein sequence ID" value="EAL62471"/>
    <property type="gene ID" value="DDB_G0289917"/>
</dbReference>
<dbReference type="GeneID" id="8627389"/>
<dbReference type="KEGG" id="ddi:DDB_G0289917"/>
<dbReference type="dictyBase" id="DDB_G0289917"/>
<dbReference type="VEuPathDB" id="AmoebaDB:DDB_G0289917"/>
<dbReference type="eggNOG" id="ENOG502QPW5">
    <property type="taxonomic scope" value="Eukaryota"/>
</dbReference>
<dbReference type="HOGENOM" id="CLU_306176_0_0_1"/>
<dbReference type="InParanoid" id="Q54GU5"/>
<dbReference type="Reactome" id="R-DDI-193648">
    <property type="pathway name" value="NRAGE signals death through JNK"/>
</dbReference>
<dbReference type="PRO" id="PR:Q54GU5"/>
<dbReference type="Proteomes" id="UP000002195">
    <property type="component" value="Chromosome 5"/>
</dbReference>
<dbReference type="GO" id="GO:0007266">
    <property type="term" value="P:Rho protein signal transduction"/>
    <property type="evidence" value="ECO:0000318"/>
    <property type="project" value="GO_Central"/>
</dbReference>
<dbReference type="InterPro" id="IPR040181">
    <property type="entry name" value="PKHG5/7"/>
</dbReference>
<dbReference type="PANTHER" id="PTHR13217:SF11">
    <property type="entry name" value="PLECKSTRIN HOMOLOGY DOMAIN-CONTAINING FAMILY G MEMBER 5"/>
    <property type="match status" value="1"/>
</dbReference>
<dbReference type="PANTHER" id="PTHR13217">
    <property type="entry name" value="PLECKSTRIN HOMOLOGY DOMAIN-CONTAINING FAMILY G MEMBER 7"/>
    <property type="match status" value="1"/>
</dbReference>
<accession>Q54GU5</accession>
<reference key="1">
    <citation type="journal article" date="2005" name="Nature">
        <title>The genome of the social amoeba Dictyostelium discoideum.</title>
        <authorList>
            <person name="Eichinger L."/>
            <person name="Pachebat J.A."/>
            <person name="Gloeckner G."/>
            <person name="Rajandream M.A."/>
            <person name="Sucgang R."/>
            <person name="Berriman M."/>
            <person name="Song J."/>
            <person name="Olsen R."/>
            <person name="Szafranski K."/>
            <person name="Xu Q."/>
            <person name="Tunggal B."/>
            <person name="Kummerfeld S."/>
            <person name="Madera M."/>
            <person name="Konfortov B.A."/>
            <person name="Rivero F."/>
            <person name="Bankier A.T."/>
            <person name="Lehmann R."/>
            <person name="Hamlin N."/>
            <person name="Davies R."/>
            <person name="Gaudet P."/>
            <person name="Fey P."/>
            <person name="Pilcher K."/>
            <person name="Chen G."/>
            <person name="Saunders D."/>
            <person name="Sodergren E.J."/>
            <person name="Davis P."/>
            <person name="Kerhornou A."/>
            <person name="Nie X."/>
            <person name="Hall N."/>
            <person name="Anjard C."/>
            <person name="Hemphill L."/>
            <person name="Bason N."/>
            <person name="Farbrother P."/>
            <person name="Desany B."/>
            <person name="Just E."/>
            <person name="Morio T."/>
            <person name="Rost R."/>
            <person name="Churcher C.M."/>
            <person name="Cooper J."/>
            <person name="Haydock S."/>
            <person name="van Driessche N."/>
            <person name="Cronin A."/>
            <person name="Goodhead I."/>
            <person name="Muzny D.M."/>
            <person name="Mourier T."/>
            <person name="Pain A."/>
            <person name="Lu M."/>
            <person name="Harper D."/>
            <person name="Lindsay R."/>
            <person name="Hauser H."/>
            <person name="James K.D."/>
            <person name="Quiles M."/>
            <person name="Madan Babu M."/>
            <person name="Saito T."/>
            <person name="Buchrieser C."/>
            <person name="Wardroper A."/>
            <person name="Felder M."/>
            <person name="Thangavelu M."/>
            <person name="Johnson D."/>
            <person name="Knights A."/>
            <person name="Loulseged H."/>
            <person name="Mungall K.L."/>
            <person name="Oliver K."/>
            <person name="Price C."/>
            <person name="Quail M.A."/>
            <person name="Urushihara H."/>
            <person name="Hernandez J."/>
            <person name="Rabbinowitsch E."/>
            <person name="Steffen D."/>
            <person name="Sanders M."/>
            <person name="Ma J."/>
            <person name="Kohara Y."/>
            <person name="Sharp S."/>
            <person name="Simmonds M.N."/>
            <person name="Spiegler S."/>
            <person name="Tivey A."/>
            <person name="Sugano S."/>
            <person name="White B."/>
            <person name="Walker D."/>
            <person name="Woodward J.R."/>
            <person name="Winckler T."/>
            <person name="Tanaka Y."/>
            <person name="Shaulsky G."/>
            <person name="Schleicher M."/>
            <person name="Weinstock G.M."/>
            <person name="Rosenthal A."/>
            <person name="Cox E.C."/>
            <person name="Chisholm R.L."/>
            <person name="Gibbs R.A."/>
            <person name="Loomis W.F."/>
            <person name="Platzer M."/>
            <person name="Kay R.R."/>
            <person name="Williams J.G."/>
            <person name="Dear P.H."/>
            <person name="Noegel A.A."/>
            <person name="Barrell B.G."/>
            <person name="Kuspa A."/>
        </authorList>
    </citation>
    <scope>NUCLEOTIDE SEQUENCE [LARGE SCALE GENOMIC DNA]</scope>
    <source>
        <strain>AX4</strain>
    </source>
</reference>
<gene>
    <name type="ORF">DDB_G0289917</name>
</gene>
<protein>
    <recommendedName>
        <fullName>Uncharacterized protein DDB_G0289917</fullName>
    </recommendedName>
</protein>
<organism>
    <name type="scientific">Dictyostelium discoideum</name>
    <name type="common">Social amoeba</name>
    <dbReference type="NCBI Taxonomy" id="44689"/>
    <lineage>
        <taxon>Eukaryota</taxon>
        <taxon>Amoebozoa</taxon>
        <taxon>Evosea</taxon>
        <taxon>Eumycetozoa</taxon>
        <taxon>Dictyostelia</taxon>
        <taxon>Dictyosteliales</taxon>
        <taxon>Dictyosteliaceae</taxon>
        <taxon>Dictyostelium</taxon>
    </lineage>
</organism>
<keyword id="KW-1185">Reference proteome</keyword>
<feature type="chain" id="PRO_0000343634" description="Uncharacterized protein DDB_G0289917">
    <location>
        <begin position="1"/>
        <end position="968"/>
    </location>
</feature>
<feature type="region of interest" description="Disordered" evidence="1">
    <location>
        <begin position="124"/>
        <end position="177"/>
    </location>
</feature>
<feature type="region of interest" description="Disordered" evidence="1">
    <location>
        <begin position="348"/>
        <end position="437"/>
    </location>
</feature>
<feature type="region of interest" description="Disordered" evidence="1">
    <location>
        <begin position="572"/>
        <end position="595"/>
    </location>
</feature>
<feature type="region of interest" description="Disordered" evidence="1">
    <location>
        <begin position="608"/>
        <end position="627"/>
    </location>
</feature>
<feature type="region of interest" description="Disordered" evidence="1">
    <location>
        <begin position="837"/>
        <end position="877"/>
    </location>
</feature>
<feature type="compositionally biased region" description="Polar residues" evidence="1">
    <location>
        <begin position="131"/>
        <end position="157"/>
    </location>
</feature>
<feature type="compositionally biased region" description="Low complexity" evidence="1">
    <location>
        <begin position="158"/>
        <end position="177"/>
    </location>
</feature>
<feature type="compositionally biased region" description="Low complexity" evidence="1">
    <location>
        <begin position="352"/>
        <end position="431"/>
    </location>
</feature>
<feature type="compositionally biased region" description="Low complexity" evidence="1">
    <location>
        <begin position="572"/>
        <end position="593"/>
    </location>
</feature>
<feature type="compositionally biased region" description="Low complexity" evidence="1">
    <location>
        <begin position="841"/>
        <end position="857"/>
    </location>
</feature>
<evidence type="ECO:0000256" key="1">
    <source>
        <dbReference type="SAM" id="MobiDB-lite"/>
    </source>
</evidence>
<proteinExistence type="predicted"/>
<sequence>MEFLSTSQSLQINFDSQQSEQIQVPIGFDSSQPPQEFEFETTPLNQLPFLKQIDIAASLSFIPASIENLTTENTITVFPVLVGQGAFSQQDSLLQFPVSLQNININNNNNSNFQLGLVPSSPQSSISSPSTIESNYLSNPSSPCQSTPILESSTPFSQKLMSNEQQQQQQPQNFSFPQKQQQAVDLNEFFGLNSVGGGGHFKACFSPDNSFNLYNDLSPEAKSCFKIFAKKCKPTTEHEVFNKVMNLLNNLTLEEIDLIIKSVSRIEKYDTLIAKVFATELDVANFPSINAKLLLQNLLVEIIDQDRKLVYHLFQLDTDHIHSLKNKCSILSISTPASDSLNFSALLQEDSNNNNNNNNNNNNNNNNNNNNNNNNNNNNNNNNNNNNNNNNNNNNNNYNNNYNNNNNNNNNNNNNNNNNNNNNNNNNNCNNSLVNDSNTNIINHTHNLNYNQNQNQNLNNNYNYDYNFTNDTNNNVYHQNNTSPANNSPYVTPVLKDNELHSQLLPQIAHQQPVAVLANYQHNQQQQSPQQIQQQLYNPHLQILSQQTNSNPHNTENIEVPKIKLQPNFQSTTTTTITQQQQQQQQQQQQQQQNTPLISQLIPESIKPKASNKLANNSNGKKVGSSKKVSKSVFPKGIITPQYFSILKDRFGFTMESLEKASNPNGANYIHSLNGSLALVNTCLVPISSEVSTGRDSKNGVVITVKNYGDYTTKLTLEYELVTSNNEVNDDKFSFKKKNLLMVEPGIFYFQYSMNRIDKNEKEVYIRFNLICEGKVIDSIQSPQIRFRNTPSEFDQPNNVQLETLIADQFKTYSDDHSVHVKFVAIANLFKKGIIPKASKDSSSSPTASSAAPGDSSSDGEGDEQSSTSTKKMKKGKPLEVTLKHSSGFTLVIPQHISKAKPEDIWRFPKNLISQTNIPIKKSEGDIIHFPYSYVVEFSALVPRGNYTITFGYEFVNKKANPIHNFVI</sequence>
<name>Y6504_DICDI</name>